<gene>
    <name type="primary">eif3a</name>
    <name type="synonym">eif3s10</name>
</gene>
<name>EIF3A_XENTR</name>
<proteinExistence type="evidence at transcript level"/>
<accession>A4II09</accession>
<organism>
    <name type="scientific">Xenopus tropicalis</name>
    <name type="common">Western clawed frog</name>
    <name type="synonym">Silurana tropicalis</name>
    <dbReference type="NCBI Taxonomy" id="8364"/>
    <lineage>
        <taxon>Eukaryota</taxon>
        <taxon>Metazoa</taxon>
        <taxon>Chordata</taxon>
        <taxon>Craniata</taxon>
        <taxon>Vertebrata</taxon>
        <taxon>Euteleostomi</taxon>
        <taxon>Amphibia</taxon>
        <taxon>Batrachia</taxon>
        <taxon>Anura</taxon>
        <taxon>Pipoidea</taxon>
        <taxon>Pipidae</taxon>
        <taxon>Xenopodinae</taxon>
        <taxon>Xenopus</taxon>
        <taxon>Silurana</taxon>
    </lineage>
</organism>
<evidence type="ECO:0000255" key="1">
    <source>
        <dbReference type="HAMAP-Rule" id="MF_03000"/>
    </source>
</evidence>
<evidence type="ECO:0000255" key="2">
    <source>
        <dbReference type="PROSITE-ProRule" id="PRU01185"/>
    </source>
</evidence>
<evidence type="ECO:0000256" key="3">
    <source>
        <dbReference type="SAM" id="MobiDB-lite"/>
    </source>
</evidence>
<reference key="1">
    <citation type="submission" date="2007-03" db="EMBL/GenBank/DDBJ databases">
        <authorList>
            <consortium name="NIH - Xenopus Gene Collection (XGC) project"/>
        </authorList>
    </citation>
    <scope>NUCLEOTIDE SEQUENCE [LARGE SCALE MRNA]</scope>
    <source>
        <tissue>Embryo</tissue>
    </source>
</reference>
<keyword id="KW-0963">Cytoplasm</keyword>
<keyword id="KW-0396">Initiation factor</keyword>
<keyword id="KW-0648">Protein biosynthesis</keyword>
<keyword id="KW-1185">Reference proteome</keyword>
<keyword id="KW-0677">Repeat</keyword>
<keyword id="KW-0694">RNA-binding</keyword>
<comment type="function">
    <text evidence="1">RNA-binding component of the eukaryotic translation initiation factor 3 (eIF-3) complex, which is involved in protein synthesis of a specialized repertoire of mRNAs and, together with other initiation factors, stimulates binding of mRNA and methionyl-tRNAi to the 40S ribosome. The eIF-3 complex specifically targets and initiates translation of a subset of mRNAs involved in cell proliferation.</text>
</comment>
<comment type="subunit">
    <text evidence="1">Component of the eukaryotic translation initiation factor 3 (eIF-3) complex, which is composed of 13 subunits: eif3a, eif3b, eif3c, eif3d, eif3e, eif3f, eif3g, eif3h, eif3i, eif3j, eif3k, eif3l and eif3m.</text>
</comment>
<comment type="subcellular location">
    <subcellularLocation>
        <location evidence="1">Cytoplasm</location>
    </subcellularLocation>
</comment>
<comment type="similarity">
    <text evidence="1">Belongs to the eIF-3 subunit A family.</text>
</comment>
<protein>
    <recommendedName>
        <fullName evidence="1">Eukaryotic translation initiation factor 3 subunit A</fullName>
        <shortName evidence="1">eIF3a</shortName>
    </recommendedName>
    <alternativeName>
        <fullName evidence="1">Eukaryotic translation initiation factor 3 subunit 10</fullName>
    </alternativeName>
    <alternativeName>
        <fullName evidence="1">eIF-3-theta</fullName>
    </alternativeName>
</protein>
<sequence>MPAYFQRPENALKRANEFLEVGKKQPALDVLYDVIKSKKHRTWQKIHEPIMLKYLELCVDLRKSHLAKEGLYQYKNICQQVNIKSLEDVVRAYLKLAEERTEAAKESSQQMVLDIEDLDNIQTPESVLLSAVSGEDTQDRTDRLLLTPWVKFLWESYRQCLDLLRNNSKVERLYHDIAQQAFKFCLLYTRKAEFRKLCDNLRMHLSQIQRHHNQSTAINLNNPESQSMHLETRLVQLDSAISMELWQEAFKAVEDIHGLFALSKKPPKPQLMANYYNKVSTVFWKSGNTLFHASTLHRLYHLSREMRKNLTQEEMQRMSTRVLLATLSIPITPERTDIARLLDMDGIILEKQRRLATLLGLQAPPTRVGLINDMVRFNMLQYVVPEVKELYNWLEMDFHPLKLCTRVTKVLDWVKEQAEKEPELQQYVPQLQSNTILRLLQQVAQLYQTIEFSRLASLVPFVDAFLLERAIVDAARHCDLQVRIDHSSRTLSFGSDLNYSTREDAPFGPFLQNMPSEQIRNQLTAMSCVLSKAVGAIKPAHVLQEKEEQHQIAITAYQKNSRKEHQRILARRQTIEERKERLENLNIQREKEEMEQKEAELQKVRKAEEERLRQEAKEREKERILQEHEQIKKKTVRERLEQIKKTELGAKAFKDIDIENLEELDPDFIMAKQVEQLEKEKKELQERLKNQEKKIDYFERAKRLEEIPLLKKAYEEQRINDMELWELQEEERISTLLLEREKAVEHKNRMSRMVEDKELFVSKLKASRQSLYEAKLKQFQERLAEEKAARLEERKRERKEERRVNYYRDKEEEEERLREEQLKQEREEQEKVENEKREAEQRDYQERLKKLEEQERKKRQRELEIEERERKREEERRGGDDTFRKDSSRWGEREESGWRRGADPDERKQVPPERDWRRGGPDSKPVINEDASNREEDENAALRKDEEQVSSRAFEEKVSLPDADEEKGGSWRDEDRGPKRGLEEDRGPRRGIDDAGPRRGFEEDRGPRRGIEDDRAPRRGFDDDRGPRRGFDDDRGPRRGFDEDRGPRRGIDDDRGPRRGFDEDRTPRRGFDDDRGPRRGFDDDRGPRRGFDEDRGPRRGFEDDRGPRRGFEDDRGPRRGFEDDRGPRRGFEDDRGPRRGFEDDRGPRRGFDEDRGPRRGFEDDRGPRRGFDEDRTPRRGFDDDRGPRRGLDEDRGSWRGGDDVPRRGADDDRGPRRGADDDRGPRRGEDRDQTPWKPMAASRPGGWREREKAREDSWGPPRDSQAPEEREWSRQGEDSEKDSERDRRPVREESAWRRGGDNSETPRKPSPGDSDRKDDSDKKRPPKTDEANPWRRGEDKDSREEERGTPRRAPAADREKSAWRTEKKEEKDTPRRIKPETDEDGWTTVRR</sequence>
<feature type="initiator methionine" description="Removed" evidence="1">
    <location>
        <position position="1"/>
    </location>
</feature>
<feature type="chain" id="PRO_0000366330" description="Eukaryotic translation initiation factor 3 subunit A">
    <location>
        <begin position="2"/>
        <end position="1391"/>
    </location>
</feature>
<feature type="domain" description="PCI" evidence="2">
    <location>
        <begin position="315"/>
        <end position="498"/>
    </location>
</feature>
<feature type="repeat" description="1">
    <location>
        <begin position="973"/>
        <end position="982"/>
    </location>
</feature>
<feature type="repeat" description="2">
    <location>
        <begin position="983"/>
        <end position="992"/>
    </location>
</feature>
<feature type="repeat" description="3; approximate">
    <location>
        <begin position="993"/>
        <end position="1001"/>
    </location>
</feature>
<feature type="repeat" description="4">
    <location>
        <begin position="1002"/>
        <end position="1011"/>
    </location>
</feature>
<feature type="repeat" description="5">
    <location>
        <begin position="1012"/>
        <end position="1021"/>
    </location>
</feature>
<feature type="repeat" description="6">
    <location>
        <begin position="1022"/>
        <end position="1031"/>
    </location>
</feature>
<feature type="repeat" description="7">
    <location>
        <begin position="1032"/>
        <end position="1041"/>
    </location>
</feature>
<feature type="repeat" description="8">
    <location>
        <begin position="1042"/>
        <end position="1051"/>
    </location>
</feature>
<feature type="repeat" description="9">
    <location>
        <begin position="1052"/>
        <end position="1061"/>
    </location>
</feature>
<feature type="repeat" description="10">
    <location>
        <begin position="1062"/>
        <end position="1071"/>
    </location>
</feature>
<feature type="repeat" description="11">
    <location>
        <begin position="1072"/>
        <end position="1081"/>
    </location>
</feature>
<feature type="repeat" description="12">
    <location>
        <begin position="1082"/>
        <end position="1091"/>
    </location>
</feature>
<feature type="repeat" description="13">
    <location>
        <begin position="1092"/>
        <end position="1101"/>
    </location>
</feature>
<feature type="repeat" description="14">
    <location>
        <begin position="1102"/>
        <end position="1111"/>
    </location>
</feature>
<feature type="repeat" description="15">
    <location>
        <begin position="1112"/>
        <end position="1120"/>
    </location>
</feature>
<feature type="repeat" description="16">
    <location>
        <begin position="1122"/>
        <end position="1131"/>
    </location>
</feature>
<feature type="repeat" description="17">
    <location>
        <begin position="1132"/>
        <end position="1141"/>
    </location>
</feature>
<feature type="repeat" description="18">
    <location>
        <begin position="1142"/>
        <end position="1151"/>
    </location>
</feature>
<feature type="repeat" description="19">
    <location>
        <begin position="1152"/>
        <end position="1161"/>
    </location>
</feature>
<feature type="repeat" description="20">
    <location>
        <begin position="1162"/>
        <end position="1171"/>
    </location>
</feature>
<feature type="repeat" description="21">
    <location>
        <begin position="1172"/>
        <end position="1181"/>
    </location>
</feature>
<feature type="repeat" description="22">
    <location>
        <begin position="1182"/>
        <end position="1191"/>
    </location>
</feature>
<feature type="repeat" description="23">
    <location>
        <begin position="1192"/>
        <end position="1201"/>
    </location>
</feature>
<feature type="repeat" description="24; approximate">
    <location>
        <begin position="1202"/>
        <end position="1209"/>
    </location>
</feature>
<feature type="repeat" description="25">
    <location>
        <begin position="1210"/>
        <end position="1219"/>
    </location>
</feature>
<feature type="repeat" description="26">
    <location>
        <begin position="1220"/>
        <end position="1229"/>
    </location>
</feature>
<feature type="region of interest" description="Disordered" evidence="3">
    <location>
        <begin position="809"/>
        <end position="1391"/>
    </location>
</feature>
<feature type="region of interest" description="26 X 10 AA approximate tandem repeats of [DE]-[DE]-[DE]-R-[GATV]-[PS]-[KRW]-R-G-[AEFGIL]">
    <location>
        <begin position="973"/>
        <end position="1229"/>
    </location>
</feature>
<feature type="compositionally biased region" description="Basic and acidic residues" evidence="3">
    <location>
        <begin position="809"/>
        <end position="921"/>
    </location>
</feature>
<feature type="compositionally biased region" description="Basic and acidic residues" evidence="3">
    <location>
        <begin position="940"/>
        <end position="959"/>
    </location>
</feature>
<feature type="compositionally biased region" description="Basic and acidic residues" evidence="3">
    <location>
        <begin position="966"/>
        <end position="1234"/>
    </location>
</feature>
<feature type="compositionally biased region" description="Basic and acidic residues" evidence="3">
    <location>
        <begin position="1246"/>
        <end position="1257"/>
    </location>
</feature>
<feature type="compositionally biased region" description="Basic and acidic residues" evidence="3">
    <location>
        <begin position="1265"/>
        <end position="1307"/>
    </location>
</feature>
<feature type="compositionally biased region" description="Basic and acidic residues" evidence="3">
    <location>
        <begin position="1313"/>
        <end position="1380"/>
    </location>
</feature>
<dbReference type="EMBL" id="BC135790">
    <property type="protein sequence ID" value="AAI35791.1"/>
    <property type="molecule type" value="mRNA"/>
</dbReference>
<dbReference type="RefSeq" id="NP_001096173.1">
    <property type="nucleotide sequence ID" value="NM_001102703.1"/>
</dbReference>
<dbReference type="SMR" id="A4II09"/>
<dbReference type="FunCoup" id="A4II09">
    <property type="interactions" value="4063"/>
</dbReference>
<dbReference type="STRING" id="8364.ENSXETP00000022662"/>
<dbReference type="PaxDb" id="8364-ENSXETP00000022578"/>
<dbReference type="DNASU" id="100124719"/>
<dbReference type="GeneID" id="100124719"/>
<dbReference type="KEGG" id="xtr:100124719"/>
<dbReference type="AGR" id="Xenbase:XB-GENE-994394"/>
<dbReference type="CTD" id="8661"/>
<dbReference type="Xenbase" id="XB-GENE-994394">
    <property type="gene designation" value="eif3a"/>
</dbReference>
<dbReference type="eggNOG" id="KOG2072">
    <property type="taxonomic scope" value="Eukaryota"/>
</dbReference>
<dbReference type="InParanoid" id="A4II09"/>
<dbReference type="OMA" id="EHITNKR"/>
<dbReference type="OrthoDB" id="18884at2759"/>
<dbReference type="Reactome" id="R-XTR-156827">
    <property type="pathway name" value="L13a-mediated translational silencing of Ceruloplasmin expression"/>
</dbReference>
<dbReference type="Reactome" id="R-XTR-72689">
    <property type="pathway name" value="Formation of a pool of free 40S subunits"/>
</dbReference>
<dbReference type="Reactome" id="R-XTR-72695">
    <property type="pathway name" value="Formation of the ternary complex, and subsequently, the 43S complex"/>
</dbReference>
<dbReference type="Reactome" id="R-XTR-72702">
    <property type="pathway name" value="Ribosomal scanning and start codon recognition"/>
</dbReference>
<dbReference type="Proteomes" id="UP000008143">
    <property type="component" value="Chromosome 7"/>
</dbReference>
<dbReference type="GO" id="GO:0016282">
    <property type="term" value="C:eukaryotic 43S preinitiation complex"/>
    <property type="evidence" value="ECO:0007669"/>
    <property type="project" value="UniProtKB-UniRule"/>
</dbReference>
<dbReference type="GO" id="GO:0033290">
    <property type="term" value="C:eukaryotic 48S preinitiation complex"/>
    <property type="evidence" value="ECO:0007669"/>
    <property type="project" value="UniProtKB-UniRule"/>
</dbReference>
<dbReference type="GO" id="GO:0005852">
    <property type="term" value="C:eukaryotic translation initiation factor 3 complex"/>
    <property type="evidence" value="ECO:0000250"/>
    <property type="project" value="UniProtKB"/>
</dbReference>
<dbReference type="GO" id="GO:0003723">
    <property type="term" value="F:RNA binding"/>
    <property type="evidence" value="ECO:0007669"/>
    <property type="project" value="UniProtKB-UniRule"/>
</dbReference>
<dbReference type="GO" id="GO:0003743">
    <property type="term" value="F:translation initiation factor activity"/>
    <property type="evidence" value="ECO:0007669"/>
    <property type="project" value="UniProtKB-UniRule"/>
</dbReference>
<dbReference type="GO" id="GO:0001732">
    <property type="term" value="P:formation of cytoplasmic translation initiation complex"/>
    <property type="evidence" value="ECO:0000250"/>
    <property type="project" value="UniProtKB"/>
</dbReference>
<dbReference type="FunFam" id="1.25.40.860:FF:000001">
    <property type="entry name" value="Eukaryotic translation initiation factor 3 subunit A"/>
    <property type="match status" value="1"/>
</dbReference>
<dbReference type="FunFam" id="1.25.40.860:FF:000002">
    <property type="entry name" value="Eukaryotic translation initiation factor 3 subunit A"/>
    <property type="match status" value="1"/>
</dbReference>
<dbReference type="FunFam" id="4.10.860.10:FF:000001">
    <property type="entry name" value="Eukaryotic translation initiation factor 3 subunit A"/>
    <property type="match status" value="1"/>
</dbReference>
<dbReference type="Gene3D" id="1.25.40.860">
    <property type="match status" value="1"/>
</dbReference>
<dbReference type="Gene3D" id="4.10.860.10">
    <property type="entry name" value="UVR domain"/>
    <property type="match status" value="1"/>
</dbReference>
<dbReference type="HAMAP" id="MF_03000">
    <property type="entry name" value="eIF3a"/>
    <property type="match status" value="1"/>
</dbReference>
<dbReference type="InterPro" id="IPR027512">
    <property type="entry name" value="EIF3A"/>
</dbReference>
<dbReference type="InterPro" id="IPR054711">
    <property type="entry name" value="eIF3a_PCI_TPR-like"/>
</dbReference>
<dbReference type="InterPro" id="IPR000717">
    <property type="entry name" value="PCI_dom"/>
</dbReference>
<dbReference type="PANTHER" id="PTHR14005:SF0">
    <property type="entry name" value="EUKARYOTIC TRANSLATION INITIATION FACTOR 3 SUBUNIT A"/>
    <property type="match status" value="1"/>
</dbReference>
<dbReference type="PANTHER" id="PTHR14005">
    <property type="entry name" value="EUKARYOTIC TRANSLATION INITIATION FACTOR 3, THETA SUBUNIT"/>
    <property type="match status" value="1"/>
</dbReference>
<dbReference type="Pfam" id="PF22591">
    <property type="entry name" value="eIF3a_PCI_TPR-like"/>
    <property type="match status" value="1"/>
</dbReference>
<dbReference type="Pfam" id="PF01399">
    <property type="entry name" value="PCI"/>
    <property type="match status" value="1"/>
</dbReference>
<dbReference type="SMART" id="SM00088">
    <property type="entry name" value="PINT"/>
    <property type="match status" value="1"/>
</dbReference>
<dbReference type="PROSITE" id="PS50250">
    <property type="entry name" value="PCI"/>
    <property type="match status" value="1"/>
</dbReference>